<feature type="chain" id="PRO_0000440207" description="Aquaporin-6">
    <location>
        <begin position="1"/>
        <end position="285"/>
    </location>
</feature>
<feature type="transmembrane region" description="Helical" evidence="1">
    <location>
        <begin position="36"/>
        <end position="56"/>
    </location>
</feature>
<feature type="transmembrane region" description="Helical" evidence="1">
    <location>
        <begin position="76"/>
        <end position="96"/>
    </location>
</feature>
<feature type="transmembrane region" description="Helical" evidence="1">
    <location>
        <begin position="105"/>
        <end position="125"/>
    </location>
</feature>
<feature type="transmembrane region" description="Helical" evidence="1">
    <location>
        <begin position="143"/>
        <end position="163"/>
    </location>
</feature>
<feature type="transmembrane region" description="Helical" evidence="1">
    <location>
        <begin position="177"/>
        <end position="197"/>
    </location>
</feature>
<feature type="transmembrane region" description="Helical" evidence="1">
    <location>
        <begin position="225"/>
        <end position="245"/>
    </location>
</feature>
<feature type="short sequence motif" description="NPA 1">
    <location>
        <begin position="86"/>
        <end position="88"/>
    </location>
</feature>
<feature type="short sequence motif" description="NPA 2">
    <location>
        <begin position="206"/>
        <end position="208"/>
    </location>
</feature>
<feature type="glycosylation site" description="N-linked (GlcNAc...) asparagine" evidence="2">
    <location>
        <position position="128"/>
    </location>
</feature>
<keyword id="KW-1003">Cell membrane</keyword>
<keyword id="KW-0325">Glycoprotein</keyword>
<keyword id="KW-0472">Membrane</keyword>
<keyword id="KW-0677">Repeat</keyword>
<keyword id="KW-0346">Stress response</keyword>
<keyword id="KW-0812">Transmembrane</keyword>
<keyword id="KW-1133">Transmembrane helix</keyword>
<keyword id="KW-0813">Transport</keyword>
<reference key="1">
    <citation type="journal article" date="2013" name="Bioinf. Biol. Insights">
        <title>The aquaporin channel repertoire of the tardigrade Milnesium tardigradum.</title>
        <authorList>
            <person name="Grohme M.A."/>
            <person name="Mali B."/>
            <person name="Welnicz W."/>
            <person name="Michel S."/>
            <person name="Schill R.O."/>
            <person name="Frohme M."/>
        </authorList>
    </citation>
    <scope>NUCLEOTIDE SEQUENCE [MRNA]</scope>
    <scope>DOMAIN</scope>
    <scope>INDUCTION</scope>
</reference>
<sequence>MAFMDKSEVRQRLQKVLQQCAKAPTWSPKEEVRQSIFWKSIRAELIGSLVLMVFSCSRDSIYGPVSYGCTYAILSYCFKSISAHFNPVITIAALLLRSITPFRCISLVLAQTLGTLSGASVCYYGLSNETETGSAPISPVLNVSPAKGFGYEFFGTFVIILTMSSYLDCNDYVSESGDSNLLPLIFGLSVGLSSGMARQATGGFLNPMRAFSLALFELNHWSNHYIYWIGPIFGCLLAVFTFDYTRPIIPNRDSNNRINFPTFNKNNKYEVEMQPETEITLATLA</sequence>
<dbReference type="EMBL" id="JN378741">
    <property type="protein sequence ID" value="AEP14560.2"/>
    <property type="molecule type" value="mRNA"/>
</dbReference>
<dbReference type="SMR" id="G5CTG3"/>
<dbReference type="GlyCosmos" id="G5CTG3">
    <property type="glycosylation" value="1 site, No reported glycans"/>
</dbReference>
<dbReference type="GO" id="GO:0005886">
    <property type="term" value="C:plasma membrane"/>
    <property type="evidence" value="ECO:0007669"/>
    <property type="project" value="UniProtKB-SubCell"/>
</dbReference>
<dbReference type="GO" id="GO:0015250">
    <property type="term" value="F:water channel activity"/>
    <property type="evidence" value="ECO:0000250"/>
    <property type="project" value="UniProtKB"/>
</dbReference>
<dbReference type="GO" id="GO:0003097">
    <property type="term" value="P:renal water transport"/>
    <property type="evidence" value="ECO:0000250"/>
    <property type="project" value="UniProtKB"/>
</dbReference>
<dbReference type="Gene3D" id="1.20.1080.10">
    <property type="entry name" value="Glycerol uptake facilitator protein"/>
    <property type="match status" value="1"/>
</dbReference>
<dbReference type="InterPro" id="IPR023271">
    <property type="entry name" value="Aquaporin-like"/>
</dbReference>
<dbReference type="InterPro" id="IPR034294">
    <property type="entry name" value="Aquaporin_transptr"/>
</dbReference>
<dbReference type="InterPro" id="IPR000425">
    <property type="entry name" value="MIP"/>
</dbReference>
<dbReference type="PANTHER" id="PTHR19139">
    <property type="entry name" value="AQUAPORIN TRANSPORTER"/>
    <property type="match status" value="1"/>
</dbReference>
<dbReference type="PANTHER" id="PTHR19139:SF199">
    <property type="entry name" value="MIP17260P"/>
    <property type="match status" value="1"/>
</dbReference>
<dbReference type="Pfam" id="PF00230">
    <property type="entry name" value="MIP"/>
    <property type="match status" value="1"/>
</dbReference>
<dbReference type="PRINTS" id="PR00783">
    <property type="entry name" value="MINTRINSICP"/>
</dbReference>
<dbReference type="SUPFAM" id="SSF81338">
    <property type="entry name" value="Aquaporin-like"/>
    <property type="match status" value="1"/>
</dbReference>
<comment type="function">
    <text evidence="6">Probable water-specific aquaporin that may modulate the water content and osmolytes during anhydrobiosis (PubMed:23761966).</text>
</comment>
<comment type="subcellular location">
    <subcellularLocation>
        <location evidence="5">Cell membrane</location>
        <topology evidence="1">Multi-pass membrane protein</topology>
    </subcellularLocation>
</comment>
<comment type="induction">
    <text evidence="3">Transcript abundance is low and expression levels are not significantly affected by desiccation or rehydratation (PubMed:23761966).</text>
</comment>
<comment type="domain">
    <text evidence="6">Aquaporins contain two tandem repeats each containing three membrane-spanning domains and a pore-forming loop with the signature motif Asn-Pro-Ala (NPA).</text>
</comment>
<comment type="similarity">
    <text evidence="5">Belongs to the MIP/aquaporin (TC 1.A.8) family.</text>
</comment>
<name>AQP6_MILTA</name>
<evidence type="ECO:0000255" key="1"/>
<evidence type="ECO:0000255" key="2">
    <source>
        <dbReference type="PROSITE-ProRule" id="PRU00498"/>
    </source>
</evidence>
<evidence type="ECO:0000269" key="3">
    <source>
    </source>
</evidence>
<evidence type="ECO:0000303" key="4">
    <source>
    </source>
</evidence>
<evidence type="ECO:0000305" key="5"/>
<evidence type="ECO:0000305" key="6">
    <source>
    </source>
</evidence>
<protein>
    <recommendedName>
        <fullName evidence="4">Aquaporin-6</fullName>
        <shortName evidence="4">AQP-6</shortName>
    </recommendedName>
</protein>
<organism>
    <name type="scientific">Milnesium tardigradum</name>
    <name type="common">Water bear</name>
    <name type="synonym">Tardigrade</name>
    <dbReference type="NCBI Taxonomy" id="46460"/>
    <lineage>
        <taxon>Eukaryota</taxon>
        <taxon>Metazoa</taxon>
        <taxon>Ecdysozoa</taxon>
        <taxon>Tardigrada</taxon>
        <taxon>Eutardigrada</taxon>
        <taxon>Apochela</taxon>
        <taxon>Milnesiidae</taxon>
        <taxon>Milnesium</taxon>
    </lineage>
</organism>
<proteinExistence type="evidence at transcript level"/>
<accession>G5CTG3</accession>
<gene>
    <name evidence="4" type="primary">AQP6</name>
</gene>